<protein>
    <recommendedName>
        <fullName evidence="1">Large ribosomal subunit protein bL32c</fullName>
    </recommendedName>
    <alternativeName>
        <fullName>50S ribosomal protein L32, plastid</fullName>
    </alternativeName>
</protein>
<organism>
    <name type="scientific">Prototheca wickerhamii</name>
    <dbReference type="NCBI Taxonomy" id="3111"/>
    <lineage>
        <taxon>Eukaryota</taxon>
        <taxon>Viridiplantae</taxon>
        <taxon>Chlorophyta</taxon>
        <taxon>core chlorophytes</taxon>
        <taxon>Trebouxiophyceae</taxon>
        <taxon>Chlorellales</taxon>
        <taxon>Chlorellaceae</taxon>
        <taxon>Prototheca</taxon>
    </lineage>
</organism>
<keyword id="KW-0934">Plastid</keyword>
<keyword id="KW-0687">Ribonucleoprotein</keyword>
<keyword id="KW-0689">Ribosomal protein</keyword>
<comment type="subcellular location">
    <subcellularLocation>
        <location>Plastid</location>
    </subcellularLocation>
</comment>
<comment type="similarity">
    <text evidence="1">Belongs to the bacterial ribosomal protein bL32 family.</text>
</comment>
<feature type="chain" id="PRO_0000172476" description="Large ribosomal subunit protein bL32c">
    <location>
        <begin position="1"/>
        <end position="47"/>
    </location>
</feature>
<geneLocation type="non-photosynthetic plastid"/>
<dbReference type="EMBL" id="AJ245645">
    <property type="protein sequence ID" value="CAB53106.1"/>
    <property type="molecule type" value="Genomic_DNA"/>
</dbReference>
<dbReference type="SMR" id="Q9TJR5"/>
<dbReference type="GO" id="GO:0015934">
    <property type="term" value="C:large ribosomal subunit"/>
    <property type="evidence" value="ECO:0007669"/>
    <property type="project" value="InterPro"/>
</dbReference>
<dbReference type="GO" id="GO:0009536">
    <property type="term" value="C:plastid"/>
    <property type="evidence" value="ECO:0007669"/>
    <property type="project" value="UniProtKB-SubCell"/>
</dbReference>
<dbReference type="GO" id="GO:0003735">
    <property type="term" value="F:structural constituent of ribosome"/>
    <property type="evidence" value="ECO:0007669"/>
    <property type="project" value="InterPro"/>
</dbReference>
<dbReference type="GO" id="GO:0006412">
    <property type="term" value="P:translation"/>
    <property type="evidence" value="ECO:0007669"/>
    <property type="project" value="InterPro"/>
</dbReference>
<dbReference type="HAMAP" id="MF_00340">
    <property type="entry name" value="Ribosomal_bL32"/>
    <property type="match status" value="1"/>
</dbReference>
<dbReference type="InterPro" id="IPR002677">
    <property type="entry name" value="Ribosomal_bL32"/>
</dbReference>
<dbReference type="InterPro" id="IPR011332">
    <property type="entry name" value="Ribosomal_zn-bd"/>
</dbReference>
<dbReference type="NCBIfam" id="TIGR01031">
    <property type="entry name" value="rpmF_bact"/>
    <property type="match status" value="1"/>
</dbReference>
<dbReference type="Pfam" id="PF01783">
    <property type="entry name" value="Ribosomal_L32p"/>
    <property type="match status" value="1"/>
</dbReference>
<dbReference type="SUPFAM" id="SSF57829">
    <property type="entry name" value="Zn-binding ribosomal proteins"/>
    <property type="match status" value="1"/>
</dbReference>
<name>RK32_PROWI</name>
<sequence>MAVPKKRTSKSKKNLRKSQWKAQAFVQAKKALAKAKTVLKLLLNKDN</sequence>
<evidence type="ECO:0000305" key="1"/>
<accession>Q9TJR5</accession>
<proteinExistence type="inferred from homology"/>
<reference key="1">
    <citation type="journal article" date="2002" name="Mol. Genet. Genomics">
        <title>The genes encoding subunits of ATP synthase are conserved in the reduced plastid genome of the heterotrophic alga Prototheca wickerhamii.</title>
        <authorList>
            <person name="Knauf U."/>
            <person name="Hachtel W."/>
        </authorList>
    </citation>
    <scope>NUCLEOTIDE SEQUENCE [GENOMIC DNA]</scope>
    <source>
        <strain>263-11</strain>
    </source>
</reference>
<gene>
    <name type="primary">rpl32</name>
</gene>